<reference key="1">
    <citation type="journal article" date="2007" name="PLoS Genet.">
        <title>Patterns and implications of gene gain and loss in the evolution of Prochlorococcus.</title>
        <authorList>
            <person name="Kettler G.C."/>
            <person name="Martiny A.C."/>
            <person name="Huang K."/>
            <person name="Zucker J."/>
            <person name="Coleman M.L."/>
            <person name="Rodrigue S."/>
            <person name="Chen F."/>
            <person name="Lapidus A."/>
            <person name="Ferriera S."/>
            <person name="Johnson J."/>
            <person name="Steglich C."/>
            <person name="Church G.M."/>
            <person name="Richardson P."/>
            <person name="Chisholm S.W."/>
        </authorList>
    </citation>
    <scope>NUCLEOTIDE SEQUENCE [LARGE SCALE GENOMIC DNA]</scope>
    <source>
        <strain>MIT 9303</strain>
    </source>
</reference>
<organism>
    <name type="scientific">Prochlorococcus marinus (strain MIT 9303)</name>
    <dbReference type="NCBI Taxonomy" id="59922"/>
    <lineage>
        <taxon>Bacteria</taxon>
        <taxon>Bacillati</taxon>
        <taxon>Cyanobacteriota</taxon>
        <taxon>Cyanophyceae</taxon>
        <taxon>Synechococcales</taxon>
        <taxon>Prochlorococcaceae</taxon>
        <taxon>Prochlorococcus</taxon>
    </lineage>
</organism>
<keyword id="KW-0066">ATP synthesis</keyword>
<keyword id="KW-0139">CF(1)</keyword>
<keyword id="KW-0375">Hydrogen ion transport</keyword>
<keyword id="KW-0406">Ion transport</keyword>
<keyword id="KW-0472">Membrane</keyword>
<keyword id="KW-0793">Thylakoid</keyword>
<keyword id="KW-0813">Transport</keyword>
<accession>A2C6Z3</accession>
<sequence length="133" mass="14052">MSLTLRVLAPDQSVFDGTAEEVILPSTTGLIGILPGHISLVTALDIGVMRVRTNGAWNSIALMGGFAEVEADDVTVLVNGAELGDSIDATTAEAELEQAKAKVSQMEGQEPSTEKIKAQQTFNRARARVQATK</sequence>
<evidence type="ECO:0000255" key="1">
    <source>
        <dbReference type="HAMAP-Rule" id="MF_00530"/>
    </source>
</evidence>
<proteinExistence type="inferred from homology"/>
<feature type="chain" id="PRO_1000056518" description="ATP synthase epsilon chain">
    <location>
        <begin position="1"/>
        <end position="133"/>
    </location>
</feature>
<gene>
    <name evidence="1" type="primary">atpC</name>
    <name type="ordered locus">P9303_05011</name>
</gene>
<protein>
    <recommendedName>
        <fullName evidence="1">ATP synthase epsilon chain</fullName>
    </recommendedName>
    <alternativeName>
        <fullName evidence="1">ATP synthase F1 sector epsilon subunit</fullName>
    </alternativeName>
    <alternativeName>
        <fullName evidence="1">F-ATPase epsilon subunit</fullName>
    </alternativeName>
</protein>
<comment type="function">
    <text evidence="1">Produces ATP from ADP in the presence of a proton gradient across the membrane.</text>
</comment>
<comment type="subunit">
    <text evidence="1">F-type ATPases have 2 components, CF(1) - the catalytic core - and CF(0) - the membrane proton channel. CF(1) has five subunits: alpha(3), beta(3), gamma(1), delta(1), epsilon(1). CF(0) has three main subunits: a, b and c.</text>
</comment>
<comment type="subcellular location">
    <subcellularLocation>
        <location evidence="1">Cellular thylakoid membrane</location>
        <topology evidence="1">Peripheral membrane protein</topology>
    </subcellularLocation>
</comment>
<comment type="similarity">
    <text evidence="1">Belongs to the ATPase epsilon chain family.</text>
</comment>
<name>ATPE_PROM3</name>
<dbReference type="EMBL" id="CP000554">
    <property type="protein sequence ID" value="ABM77253.1"/>
    <property type="molecule type" value="Genomic_DNA"/>
</dbReference>
<dbReference type="RefSeq" id="WP_011825176.1">
    <property type="nucleotide sequence ID" value="NC_008820.1"/>
</dbReference>
<dbReference type="SMR" id="A2C6Z3"/>
<dbReference type="STRING" id="59922.P9303_05011"/>
<dbReference type="KEGG" id="pmf:P9303_05011"/>
<dbReference type="HOGENOM" id="CLU_084338_1_2_3"/>
<dbReference type="BioCyc" id="PMAR59922:G1G80-461-MONOMER"/>
<dbReference type="Proteomes" id="UP000002274">
    <property type="component" value="Chromosome"/>
</dbReference>
<dbReference type="GO" id="GO:0031676">
    <property type="term" value="C:plasma membrane-derived thylakoid membrane"/>
    <property type="evidence" value="ECO:0007669"/>
    <property type="project" value="UniProtKB-SubCell"/>
</dbReference>
<dbReference type="GO" id="GO:0045259">
    <property type="term" value="C:proton-transporting ATP synthase complex"/>
    <property type="evidence" value="ECO:0007669"/>
    <property type="project" value="UniProtKB-KW"/>
</dbReference>
<dbReference type="GO" id="GO:0005524">
    <property type="term" value="F:ATP binding"/>
    <property type="evidence" value="ECO:0007669"/>
    <property type="project" value="UniProtKB-UniRule"/>
</dbReference>
<dbReference type="GO" id="GO:0046933">
    <property type="term" value="F:proton-transporting ATP synthase activity, rotational mechanism"/>
    <property type="evidence" value="ECO:0007669"/>
    <property type="project" value="UniProtKB-UniRule"/>
</dbReference>
<dbReference type="CDD" id="cd12152">
    <property type="entry name" value="F1-ATPase_delta"/>
    <property type="match status" value="1"/>
</dbReference>
<dbReference type="Gene3D" id="2.60.15.10">
    <property type="entry name" value="F0F1 ATP synthase delta/epsilon subunit, N-terminal"/>
    <property type="match status" value="1"/>
</dbReference>
<dbReference type="Gene3D" id="1.10.287.540">
    <property type="entry name" value="Helix hairpin bin"/>
    <property type="match status" value="1"/>
</dbReference>
<dbReference type="HAMAP" id="MF_00530">
    <property type="entry name" value="ATP_synth_epsil_bac"/>
    <property type="match status" value="1"/>
</dbReference>
<dbReference type="InterPro" id="IPR001469">
    <property type="entry name" value="ATP_synth_F1_dsu/esu"/>
</dbReference>
<dbReference type="InterPro" id="IPR020546">
    <property type="entry name" value="ATP_synth_F1_dsu/esu_N"/>
</dbReference>
<dbReference type="InterPro" id="IPR020547">
    <property type="entry name" value="ATP_synth_F1_esu_C"/>
</dbReference>
<dbReference type="InterPro" id="IPR036771">
    <property type="entry name" value="ATPsynth_dsu/esu_N"/>
</dbReference>
<dbReference type="NCBIfam" id="TIGR01216">
    <property type="entry name" value="ATP_synt_epsi"/>
    <property type="match status" value="1"/>
</dbReference>
<dbReference type="PANTHER" id="PTHR13822">
    <property type="entry name" value="ATP SYNTHASE DELTA/EPSILON CHAIN"/>
    <property type="match status" value="1"/>
</dbReference>
<dbReference type="PANTHER" id="PTHR13822:SF10">
    <property type="entry name" value="ATP SYNTHASE EPSILON CHAIN, CHLOROPLASTIC"/>
    <property type="match status" value="1"/>
</dbReference>
<dbReference type="Pfam" id="PF00401">
    <property type="entry name" value="ATP-synt_DE"/>
    <property type="match status" value="1"/>
</dbReference>
<dbReference type="Pfam" id="PF02823">
    <property type="entry name" value="ATP-synt_DE_N"/>
    <property type="match status" value="1"/>
</dbReference>
<dbReference type="SUPFAM" id="SSF51344">
    <property type="entry name" value="Epsilon subunit of F1F0-ATP synthase N-terminal domain"/>
    <property type="match status" value="1"/>
</dbReference>